<dbReference type="EMBL" id="LC079035">
    <property type="protein sequence ID" value="BAV32157.1"/>
    <property type="molecule type" value="Genomic_DNA"/>
</dbReference>
<dbReference type="SMR" id="A0A1B4XBK2"/>
<dbReference type="GO" id="GO:0005634">
    <property type="term" value="C:nucleus"/>
    <property type="evidence" value="ECO:0007669"/>
    <property type="project" value="UniProtKB-SubCell"/>
</dbReference>
<dbReference type="GO" id="GO:0017000">
    <property type="term" value="P:antibiotic biosynthetic process"/>
    <property type="evidence" value="ECO:0007669"/>
    <property type="project" value="UniProtKB-KW"/>
</dbReference>
<dbReference type="Gene3D" id="3.30.559.10">
    <property type="entry name" value="Chloramphenicol acetyltransferase-like domain"/>
    <property type="match status" value="2"/>
</dbReference>
<dbReference type="InterPro" id="IPR023213">
    <property type="entry name" value="CAT-like_dom_sf"/>
</dbReference>
<reference key="1">
    <citation type="journal article" date="2016" name="J. Antibiot.">
        <title>Genome mining of the sordarin biosynthetic gene cluster from Sordaria araneosa Cain ATCC 36386: characterization of cycloaraneosene synthase and GDP-6-deoxyaltrose transferase.</title>
        <authorList>
            <person name="Kudo F."/>
            <person name="Matsuura Y."/>
            <person name="Hayashi T."/>
            <person name="Fukushima M."/>
            <person name="Eguchi T."/>
        </authorList>
    </citation>
    <scope>NUCLEOTIDE SEQUENCE [GENOMIC DNA]</scope>
    <scope>FUNCTION</scope>
    <scope>PATHWAY</scope>
    <source>
        <strain>ATCC 36386 / NRRL 3196</strain>
    </source>
</reference>
<comment type="function">
    <text evidence="1">Transcriptional regulator; part of the gene cluster that mediates the biosynthesis of sordarin and hypoxysordarin, glycoside antibiotics with a unique tetracyclic diterpene aglycone structure (PubMed:27072286). First, the geranylgeranyl diphosphate synthase sdnC constructs GGDP from farnesyl diphosphate and isopentenyl diphosphate (PubMed:27072286). The diterpene cyclase sdnA then catalyzes the cyclization of GGDP to afford cycloaraneosene (PubMed:27072286). Cycloaraneosene is then hydroxylated four times by the putative cytochrome P450 monooxygenases sdnB, sdnE, sdnF and sdnH to give a hydroxylated cycloaraneosene derivative such as cycloaraneosene-8,9,13,19-tetraol (PubMed:27072286). Although the order of the hydroxylations is unclear, at least C8, C9 and C13 of the cycloaraneosene skeleton are hydroxylated before the sordaricin formation (PubMed:27072286). Dehydration of the 13-hydroxy group of the hydroxylated cycloaraneosene derivative might be catalyzed by an unassigned hypothetical protein such as sdnG and sdnP to construct the cyclopentadiene moiety (PubMed:27072286). The FAD-dependent oxidoreductase sdnN is proposed to catalyze the oxidation at C9 of the hydroxylated cycloaraneosene derivative and also catalyze the Baeyer-Villiger oxidation to give the lactone intermediate (PubMed:27072286). The presumed lactone intermediate would be hydrolyzed to give an acrolein moiety and a carboxylate moiety (PubMed:27072286). Then, [4+2]cycloaddition would occur between the acrolein moiety and the cyclopentadiene moiety to give sordaricin (PubMed:27072286). SdnN might also be involved in the [4+2]cycloaddition after the hypothesized oxidation to accommodate the oxidized product and prompt the [4+2]cycloaddition (PubMed:27072286). GDP-6-deoxy-D-altrose may be biosynthesized from GDP-D-mannose by the putative GDP-mannose-4,6-dehydratase sdnI and the short-chain dehydrogenase sdnK (PubMed:27072286). The glycosyltransferase sdnJ catalyzes the attachment of 6-deoxy-D-altrose onto the 19-hydroxy group of sordaricin to give 4'-O-demethylsordarin (PubMed:27072286). The methyltransferase sdnD would complete the biosynthesis of sordarin (PubMed:27072286). Sordarin can be further modified into hypoxysordarin (PubMed:27072286). The unique acyl chain at the 3'-hydroxy group of hypoxysordarin would be constructed by an iterative type I PKS sdnO and the trans-acting polyketide methyltransferase sdnL. SdnL would be responsible for the introduction of an alpha-methyl group of the polyketide chain (PubMed:27072286). Alternatively, the beta-lactamase-like protein sdnR might be responsible for the cleavage and transfer of the polyketide chain from the PKS sdnO to sordarin (PubMed:27072286). Two putative cytochrome P450 monooxygenases, sdnQ and sdnT, might catalyze the epoxidations of the polyketide chain to complete the biosynthesis of hypoxysordarin (PubMed:27072286). Transcriptional regulators sdnM and sdnS are presumably encoded for the transcriptional regulation of the expression of the sdn gene cluster (PubMed:27072286).</text>
</comment>
<comment type="pathway">
    <text evidence="4">Antibiotic biosynthesis.</text>
</comment>
<comment type="subcellular location">
    <subcellularLocation>
        <location evidence="3">Nucleus</location>
    </subcellularLocation>
</comment>
<organism>
    <name type="scientific">Sordaria araneosa</name>
    <name type="common">Pleurage araneosa</name>
    <dbReference type="NCBI Taxonomy" id="573841"/>
    <lineage>
        <taxon>Eukaryota</taxon>
        <taxon>Fungi</taxon>
        <taxon>Dikarya</taxon>
        <taxon>Ascomycota</taxon>
        <taxon>Pezizomycotina</taxon>
        <taxon>Sordariomycetes</taxon>
        <taxon>Sordariomycetidae</taxon>
        <taxon>Sordariales</taxon>
        <taxon>Sordariaceae</taxon>
        <taxon>Sordaria</taxon>
    </lineage>
</organism>
<evidence type="ECO:0000269" key="1">
    <source>
    </source>
</evidence>
<evidence type="ECO:0000303" key="2">
    <source>
    </source>
</evidence>
<evidence type="ECO:0000305" key="3"/>
<evidence type="ECO:0000305" key="4">
    <source>
    </source>
</evidence>
<accession>A0A1B4XBK2</accession>
<sequence length="499" mass="57000">MGLFSAKREPPPVVPTDTITPLRFVDELYPFAFDFSLVFRDVLDPEVLRAAADSVLQRDGWRQLGARLRRDQNSKLEYHLPTHFSKERPLFLFTTDNHTDMSINDHPVLRHVPEPNPDRPTVHQPAAATFRRHMRGPNSPEAFDDWLYNDIPQLAIHIISFSDATIITVTLLHTLTDFLGLMAFYKAWLLTLHGRQDEIAPYIGYLDADPLEGLQQGQAKPPKYVFADREVGRWGYLKFVFRHMWDCYWHPEASLRFFTLPGKFVENLSTSARAELIAAHPERKPEDCFVSDSDVLCAWWTGLMVRNQSPACPPAQSVCLTNRFDSRDVLAKMGLLPSTNISFFGNAAYNASFFAPASAFAGPEKEKLGLLANQVRDSIKLHRTVEQLQAQDAAFRESKARTGHLPLYGEGDMMMCVFTNCYRGRLYQMDFSPALVDKEKSKGKKQALPVFINCTGMESRWSARNATAILGKSENGDWWMSSRLRQDVWERIEAEFERM</sequence>
<gene>
    <name evidence="2" type="primary">sdnM</name>
</gene>
<feature type="chain" id="PRO_0000441058" description="Transcriptional regulator sdnM">
    <location>
        <begin position="1"/>
        <end position="499"/>
    </location>
</feature>
<proteinExistence type="predicted"/>
<protein>
    <recommendedName>
        <fullName evidence="2">Transcriptional regulator sdnM</fullName>
    </recommendedName>
    <alternativeName>
        <fullName evidence="2">Sordarin/hypoxysordarin biosynthesis cluster protein M</fullName>
    </alternativeName>
</protein>
<keyword id="KW-0045">Antibiotic biosynthesis</keyword>
<keyword id="KW-0539">Nucleus</keyword>
<keyword id="KW-0804">Transcription</keyword>
<keyword id="KW-0805">Transcription regulation</keyword>
<name>SDNM_SORAA</name>